<sequence>MSKEKVLLAYSGGLDTSCILKWLLEQDYEVICFMADVGQTEDFAAAREKALKIGAADVVVKDMKDFFVEKFVWPAVQMGLIYEDRYLLGTSLARPCISKGLMDVAVQRGCSYISHGATGKGNDQIRFELSCYALSPTIRVIAPWRMETFCQRFQGRSDLLEYAKRSNIPVSATTKAPWSMDANIMHISYESGILEDPSVAAPEELYQLTQSPTRAPDTPTVAEIVFKAGLPVRVTELVSGRTMERPVDILAFLNKAGGEHGVGRIDIVENRYIGLKSRGVYETPGVTVLHCAHRDLEIYCLDREVLRVKKYLADRMADYVYNGYWYAPEAEYVRKCILESQKHVSGKVVVEMFKGHVMVTSRESMHSLYNQELASMEVHGNFSPYSSTGFIEINAVRLREHHRVFGTANMTKHFSRTESDMKLI</sequence>
<name>ASSY_ANOGA</name>
<keyword id="KW-0028">Amino-acid biosynthesis</keyword>
<keyword id="KW-0055">Arginine biosynthesis</keyword>
<keyword id="KW-0067">ATP-binding</keyword>
<keyword id="KW-0436">Ligase</keyword>
<keyword id="KW-0547">Nucleotide-binding</keyword>
<keyword id="KW-1185">Reference proteome</keyword>
<keyword id="KW-0835">Urea cycle</keyword>
<protein>
    <recommendedName>
        <fullName>Argininosuccinate synthase</fullName>
        <ecNumber>6.3.4.5</ecNumber>
    </recommendedName>
    <alternativeName>
        <fullName>Citrulline--aspartate ligase</fullName>
    </alternativeName>
</protein>
<organism>
    <name type="scientific">Anopheles gambiae</name>
    <name type="common">African malaria mosquito</name>
    <dbReference type="NCBI Taxonomy" id="7165"/>
    <lineage>
        <taxon>Eukaryota</taxon>
        <taxon>Metazoa</taxon>
        <taxon>Ecdysozoa</taxon>
        <taxon>Arthropoda</taxon>
        <taxon>Hexapoda</taxon>
        <taxon>Insecta</taxon>
        <taxon>Pterygota</taxon>
        <taxon>Neoptera</taxon>
        <taxon>Endopterygota</taxon>
        <taxon>Diptera</taxon>
        <taxon>Nematocera</taxon>
        <taxon>Culicoidea</taxon>
        <taxon>Culicidae</taxon>
        <taxon>Anophelinae</taxon>
        <taxon>Anopheles</taxon>
    </lineage>
</organism>
<evidence type="ECO:0000250" key="1"/>
<evidence type="ECO:0000305" key="2"/>
<comment type="catalytic activity">
    <reaction>
        <text>L-citrulline + L-aspartate + ATP = 2-(N(omega)-L-arginino)succinate + AMP + diphosphate + H(+)</text>
        <dbReference type="Rhea" id="RHEA:10932"/>
        <dbReference type="ChEBI" id="CHEBI:15378"/>
        <dbReference type="ChEBI" id="CHEBI:29991"/>
        <dbReference type="ChEBI" id="CHEBI:30616"/>
        <dbReference type="ChEBI" id="CHEBI:33019"/>
        <dbReference type="ChEBI" id="CHEBI:57472"/>
        <dbReference type="ChEBI" id="CHEBI:57743"/>
        <dbReference type="ChEBI" id="CHEBI:456215"/>
        <dbReference type="EC" id="6.3.4.5"/>
    </reaction>
</comment>
<comment type="pathway">
    <text>Amino-acid biosynthesis; L-arginine biosynthesis; L-arginine from L-ornithine and carbamoyl phosphate: step 2/3.</text>
</comment>
<comment type="pathway">
    <text>Nitrogen metabolism; urea cycle; (N(omega)-L-arginino)succinate from L-aspartate and L-citrulline: step 1/1.</text>
</comment>
<comment type="subunit">
    <text evidence="1">Homotetramer.</text>
</comment>
<comment type="similarity">
    <text evidence="2">Belongs to the argininosuccinate synthase family.</text>
</comment>
<accession>Q7PR38</accession>
<proteinExistence type="inferred from homology"/>
<reference key="1">
    <citation type="journal article" date="2002" name="Science">
        <title>The genome sequence of the malaria mosquito Anopheles gambiae.</title>
        <authorList>
            <person name="Holt R.A."/>
            <person name="Subramanian G.M."/>
            <person name="Halpern A."/>
            <person name="Sutton G.G."/>
            <person name="Charlab R."/>
            <person name="Nusskern D.R."/>
            <person name="Wincker P."/>
            <person name="Clark A.G."/>
            <person name="Ribeiro J.M.C."/>
            <person name="Wides R."/>
            <person name="Salzberg S.L."/>
            <person name="Loftus B.J."/>
            <person name="Yandell M.D."/>
            <person name="Majoros W.H."/>
            <person name="Rusch D.B."/>
            <person name="Lai Z."/>
            <person name="Kraft C.L."/>
            <person name="Abril J.F."/>
            <person name="Anthouard V."/>
            <person name="Arensburger P."/>
            <person name="Atkinson P.W."/>
            <person name="Baden H."/>
            <person name="de Berardinis V."/>
            <person name="Baldwin D."/>
            <person name="Benes V."/>
            <person name="Biedler J."/>
            <person name="Blass C."/>
            <person name="Bolanos R."/>
            <person name="Boscus D."/>
            <person name="Barnstead M."/>
            <person name="Cai S."/>
            <person name="Center A."/>
            <person name="Chaturverdi K."/>
            <person name="Christophides G.K."/>
            <person name="Chrystal M.A.M."/>
            <person name="Clamp M."/>
            <person name="Cravchik A."/>
            <person name="Curwen V."/>
            <person name="Dana A."/>
            <person name="Delcher A."/>
            <person name="Dew I."/>
            <person name="Evans C.A."/>
            <person name="Flanigan M."/>
            <person name="Grundschober-Freimoser A."/>
            <person name="Friedli L."/>
            <person name="Gu Z."/>
            <person name="Guan P."/>
            <person name="Guigo R."/>
            <person name="Hillenmeyer M.E."/>
            <person name="Hladun S.L."/>
            <person name="Hogan J.R."/>
            <person name="Hong Y.S."/>
            <person name="Hoover J."/>
            <person name="Jaillon O."/>
            <person name="Ke Z."/>
            <person name="Kodira C.D."/>
            <person name="Kokoza E."/>
            <person name="Koutsos A."/>
            <person name="Letunic I."/>
            <person name="Levitsky A.A."/>
            <person name="Liang Y."/>
            <person name="Lin J.-J."/>
            <person name="Lobo N.F."/>
            <person name="Lopez J.R."/>
            <person name="Malek J.A."/>
            <person name="McIntosh T.C."/>
            <person name="Meister S."/>
            <person name="Miller J.R."/>
            <person name="Mobarry C."/>
            <person name="Mongin E."/>
            <person name="Murphy S.D."/>
            <person name="O'Brochta D.A."/>
            <person name="Pfannkoch C."/>
            <person name="Qi R."/>
            <person name="Regier M.A."/>
            <person name="Remington K."/>
            <person name="Shao H."/>
            <person name="Sharakhova M.V."/>
            <person name="Sitter C.D."/>
            <person name="Shetty J."/>
            <person name="Smith T.J."/>
            <person name="Strong R."/>
            <person name="Sun J."/>
            <person name="Thomasova D."/>
            <person name="Ton L.Q."/>
            <person name="Topalis P."/>
            <person name="Tu Z.J."/>
            <person name="Unger M.F."/>
            <person name="Walenz B."/>
            <person name="Wang A.H."/>
            <person name="Wang J."/>
            <person name="Wang M."/>
            <person name="Wang X."/>
            <person name="Woodford K.J."/>
            <person name="Wortman J.R."/>
            <person name="Wu M."/>
            <person name="Yao A."/>
            <person name="Zdobnov E.M."/>
            <person name="Zhang H."/>
            <person name="Zhao Q."/>
            <person name="Zhao S."/>
            <person name="Zhu S.C."/>
            <person name="Zhimulev I."/>
            <person name="Coluzzi M."/>
            <person name="della Torre A."/>
            <person name="Roth C.W."/>
            <person name="Louis C."/>
            <person name="Kalush F."/>
            <person name="Mural R.J."/>
            <person name="Myers E.W."/>
            <person name="Adams M.D."/>
            <person name="Smith H.O."/>
            <person name="Broder S."/>
            <person name="Gardner M.J."/>
            <person name="Fraser C.M."/>
            <person name="Birney E."/>
            <person name="Bork P."/>
            <person name="Brey P.T."/>
            <person name="Venter J.C."/>
            <person name="Weissenbach J."/>
            <person name="Kafatos F.C."/>
            <person name="Collins F.H."/>
            <person name="Hoffman S.L."/>
        </authorList>
    </citation>
    <scope>NUCLEOTIDE SEQUENCE [LARGE SCALE GENOMIC DNA]</scope>
    <source>
        <strain>PEST</strain>
    </source>
</reference>
<dbReference type="EC" id="6.3.4.5"/>
<dbReference type="EMBL" id="AAAB01008859">
    <property type="protein sequence ID" value="EAA07894.4"/>
    <property type="molecule type" value="Genomic_DNA"/>
</dbReference>
<dbReference type="SMR" id="Q7PR38"/>
<dbReference type="FunCoup" id="Q7PR38">
    <property type="interactions" value="663"/>
</dbReference>
<dbReference type="STRING" id="7165.Q7PR38"/>
<dbReference type="PaxDb" id="7165-AGAP003015-PA"/>
<dbReference type="EnsemblMetazoa" id="AGAP003015-RA">
    <property type="protein sequence ID" value="AGAP003015-PA"/>
    <property type="gene ID" value="AGAP003015"/>
</dbReference>
<dbReference type="GeneID" id="1272938"/>
<dbReference type="KEGG" id="aga:1272938"/>
<dbReference type="VEuPathDB" id="VectorBase:AGAMI1_003975"/>
<dbReference type="VEuPathDB" id="VectorBase:AGAP003015"/>
<dbReference type="eggNOG" id="KOG1706">
    <property type="taxonomic scope" value="Eukaryota"/>
</dbReference>
<dbReference type="HOGENOM" id="CLU_032784_4_2_1"/>
<dbReference type="InParanoid" id="Q7PR38"/>
<dbReference type="OMA" id="WRWTVSP"/>
<dbReference type="OrthoDB" id="1688907at2759"/>
<dbReference type="PhylomeDB" id="Q7PR38"/>
<dbReference type="UniPathway" id="UPA00068">
    <property type="reaction ID" value="UER00113"/>
</dbReference>
<dbReference type="UniPathway" id="UPA00158">
    <property type="reaction ID" value="UER00272"/>
</dbReference>
<dbReference type="Proteomes" id="UP000007062">
    <property type="component" value="Chromosome 2R"/>
</dbReference>
<dbReference type="GO" id="GO:0005737">
    <property type="term" value="C:cytoplasm"/>
    <property type="evidence" value="ECO:0000318"/>
    <property type="project" value="GO_Central"/>
</dbReference>
<dbReference type="GO" id="GO:0004055">
    <property type="term" value="F:argininosuccinate synthase activity"/>
    <property type="evidence" value="ECO:0000318"/>
    <property type="project" value="GO_Central"/>
</dbReference>
<dbReference type="GO" id="GO:0005524">
    <property type="term" value="F:ATP binding"/>
    <property type="evidence" value="ECO:0007669"/>
    <property type="project" value="UniProtKB-KW"/>
</dbReference>
<dbReference type="GO" id="GO:0000053">
    <property type="term" value="P:argininosuccinate metabolic process"/>
    <property type="evidence" value="ECO:0000318"/>
    <property type="project" value="GO_Central"/>
</dbReference>
<dbReference type="GO" id="GO:0006526">
    <property type="term" value="P:L-arginine biosynthetic process"/>
    <property type="evidence" value="ECO:0000318"/>
    <property type="project" value="GO_Central"/>
</dbReference>
<dbReference type="GO" id="GO:0000050">
    <property type="term" value="P:urea cycle"/>
    <property type="evidence" value="ECO:0000318"/>
    <property type="project" value="GO_Central"/>
</dbReference>
<dbReference type="CDD" id="cd01999">
    <property type="entry name" value="ASS"/>
    <property type="match status" value="1"/>
</dbReference>
<dbReference type="FunFam" id="3.40.50.620:FF:000019">
    <property type="entry name" value="Argininosuccinate synthase"/>
    <property type="match status" value="1"/>
</dbReference>
<dbReference type="FunFam" id="3.90.1260.10:FF:000003">
    <property type="entry name" value="Argininosuccinate synthase"/>
    <property type="match status" value="1"/>
</dbReference>
<dbReference type="Gene3D" id="3.90.1260.10">
    <property type="entry name" value="Argininosuccinate synthetase, chain A, domain 2"/>
    <property type="match status" value="1"/>
</dbReference>
<dbReference type="Gene3D" id="3.40.50.620">
    <property type="entry name" value="HUPs"/>
    <property type="match status" value="1"/>
</dbReference>
<dbReference type="HAMAP" id="MF_00005">
    <property type="entry name" value="Arg_succ_synth_type1"/>
    <property type="match status" value="1"/>
</dbReference>
<dbReference type="InterPro" id="IPR048268">
    <property type="entry name" value="Arginosuc_syn_C"/>
</dbReference>
<dbReference type="InterPro" id="IPR048267">
    <property type="entry name" value="Arginosuc_syn_N"/>
</dbReference>
<dbReference type="InterPro" id="IPR001518">
    <property type="entry name" value="Arginosuc_synth"/>
</dbReference>
<dbReference type="InterPro" id="IPR018223">
    <property type="entry name" value="Arginosuc_synth_CS"/>
</dbReference>
<dbReference type="InterPro" id="IPR023434">
    <property type="entry name" value="Arginosuc_synth_type_1_subfam"/>
</dbReference>
<dbReference type="InterPro" id="IPR024074">
    <property type="entry name" value="AS_cat/multimer_dom_body"/>
</dbReference>
<dbReference type="InterPro" id="IPR014729">
    <property type="entry name" value="Rossmann-like_a/b/a_fold"/>
</dbReference>
<dbReference type="NCBIfam" id="TIGR00032">
    <property type="entry name" value="argG"/>
    <property type="match status" value="1"/>
</dbReference>
<dbReference type="NCBIfam" id="NF001770">
    <property type="entry name" value="PRK00509.1"/>
    <property type="match status" value="1"/>
</dbReference>
<dbReference type="PANTHER" id="PTHR11587">
    <property type="entry name" value="ARGININOSUCCINATE SYNTHASE"/>
    <property type="match status" value="1"/>
</dbReference>
<dbReference type="PANTHER" id="PTHR11587:SF2">
    <property type="entry name" value="ARGININOSUCCINATE SYNTHASE"/>
    <property type="match status" value="1"/>
</dbReference>
<dbReference type="Pfam" id="PF20979">
    <property type="entry name" value="Arginosuc_syn_C"/>
    <property type="match status" value="1"/>
</dbReference>
<dbReference type="Pfam" id="PF00764">
    <property type="entry name" value="Arginosuc_synth"/>
    <property type="match status" value="1"/>
</dbReference>
<dbReference type="SUPFAM" id="SSF52402">
    <property type="entry name" value="Adenine nucleotide alpha hydrolases-like"/>
    <property type="match status" value="1"/>
</dbReference>
<dbReference type="SUPFAM" id="SSF69864">
    <property type="entry name" value="Argininosuccinate synthetase, C-terminal domain"/>
    <property type="match status" value="1"/>
</dbReference>
<dbReference type="PROSITE" id="PS00564">
    <property type="entry name" value="ARGININOSUCCIN_SYN_1"/>
    <property type="match status" value="1"/>
</dbReference>
<dbReference type="PROSITE" id="PS00565">
    <property type="entry name" value="ARGININOSUCCIN_SYN_2"/>
    <property type="match status" value="1"/>
</dbReference>
<gene>
    <name type="ORF">AGAP003015</name>
</gene>
<feature type="chain" id="PRO_0000321327" description="Argininosuccinate synthase">
    <location>
        <begin position="1"/>
        <end position="424"/>
    </location>
</feature>
<feature type="binding site" evidence="1">
    <location>
        <begin position="9"/>
        <end position="17"/>
    </location>
    <ligand>
        <name>ATP</name>
        <dbReference type="ChEBI" id="CHEBI:30616"/>
    </ligand>
</feature>
<feature type="binding site" evidence="1">
    <location>
        <position position="35"/>
    </location>
    <ligand>
        <name>ATP</name>
        <dbReference type="ChEBI" id="CHEBI:30616"/>
    </ligand>
</feature>
<feature type="binding site" evidence="1">
    <location>
        <position position="86"/>
    </location>
    <ligand>
        <name>L-citrulline</name>
        <dbReference type="ChEBI" id="CHEBI:57743"/>
    </ligand>
</feature>
<feature type="binding site" evidence="1">
    <location>
        <position position="91"/>
    </location>
    <ligand>
        <name>L-citrulline</name>
        <dbReference type="ChEBI" id="CHEBI:57743"/>
    </ligand>
</feature>
<feature type="binding site" evidence="1">
    <location>
        <begin position="114"/>
        <end position="122"/>
    </location>
    <ligand>
        <name>ATP</name>
        <dbReference type="ChEBI" id="CHEBI:30616"/>
    </ligand>
</feature>
<feature type="binding site" evidence="1">
    <location>
        <position position="118"/>
    </location>
    <ligand>
        <name>L-aspartate</name>
        <dbReference type="ChEBI" id="CHEBI:29991"/>
    </ligand>
</feature>
<feature type="binding site" evidence="1">
    <location>
        <position position="122"/>
    </location>
    <ligand>
        <name>L-aspartate</name>
        <dbReference type="ChEBI" id="CHEBI:29991"/>
    </ligand>
</feature>
<feature type="binding site" evidence="1">
    <location>
        <position position="122"/>
    </location>
    <ligand>
        <name>L-citrulline</name>
        <dbReference type="ChEBI" id="CHEBI:57743"/>
    </ligand>
</feature>
<feature type="binding site" evidence="1">
    <location>
        <position position="123"/>
    </location>
    <ligand>
        <name>L-aspartate</name>
        <dbReference type="ChEBI" id="CHEBI:29991"/>
    </ligand>
</feature>
<feature type="binding site" evidence="1">
    <location>
        <position position="126"/>
    </location>
    <ligand>
        <name>L-citrulline</name>
        <dbReference type="ChEBI" id="CHEBI:57743"/>
    </ligand>
</feature>
<feature type="binding site" evidence="1">
    <location>
        <position position="179"/>
    </location>
    <ligand>
        <name>L-citrulline</name>
        <dbReference type="ChEBI" id="CHEBI:57743"/>
    </ligand>
</feature>
<feature type="binding site" evidence="1">
    <location>
        <position position="188"/>
    </location>
    <ligand>
        <name>L-citrulline</name>
        <dbReference type="ChEBI" id="CHEBI:57743"/>
    </ligand>
</feature>
<feature type="binding site" evidence="1">
    <location>
        <position position="269"/>
    </location>
    <ligand>
        <name>L-citrulline</name>
        <dbReference type="ChEBI" id="CHEBI:57743"/>
    </ligand>
</feature>
<feature type="binding site" evidence="1">
    <location>
        <position position="281"/>
    </location>
    <ligand>
        <name>L-citrulline</name>
        <dbReference type="ChEBI" id="CHEBI:57743"/>
    </ligand>
</feature>